<reference key="1">
    <citation type="journal article" date="2003" name="J. Bacteriol.">
        <title>Complete genome sequence of the oral pathogenic bacterium Porphyromonas gingivalis strain W83.</title>
        <authorList>
            <person name="Nelson K.E."/>
            <person name="Fleischmann R.D."/>
            <person name="DeBoy R.T."/>
            <person name="Paulsen I.T."/>
            <person name="Fouts D.E."/>
            <person name="Eisen J.A."/>
            <person name="Daugherty S.C."/>
            <person name="Dodson R.J."/>
            <person name="Durkin A.S."/>
            <person name="Gwinn M.L."/>
            <person name="Haft D.H."/>
            <person name="Kolonay J.F."/>
            <person name="Nelson W.C."/>
            <person name="Mason T.M."/>
            <person name="Tallon L."/>
            <person name="Gray J."/>
            <person name="Granger D."/>
            <person name="Tettelin H."/>
            <person name="Dong H."/>
            <person name="Galvin J.L."/>
            <person name="Duncan M.J."/>
            <person name="Dewhirst F.E."/>
            <person name="Fraser C.M."/>
        </authorList>
    </citation>
    <scope>NUCLEOTIDE SEQUENCE [LARGE SCALE GENOMIC DNA]</scope>
    <source>
        <strain>ATCC BAA-308 / W83</strain>
    </source>
</reference>
<feature type="chain" id="PRO_0000176441" description="Asparagine--tRNA ligase">
    <location>
        <begin position="1"/>
        <end position="469"/>
    </location>
</feature>
<gene>
    <name evidence="1" type="primary">asnS</name>
    <name type="ordered locus">PG_1121</name>
</gene>
<organism>
    <name type="scientific">Porphyromonas gingivalis (strain ATCC BAA-308 / W83)</name>
    <dbReference type="NCBI Taxonomy" id="242619"/>
    <lineage>
        <taxon>Bacteria</taxon>
        <taxon>Pseudomonadati</taxon>
        <taxon>Bacteroidota</taxon>
        <taxon>Bacteroidia</taxon>
        <taxon>Bacteroidales</taxon>
        <taxon>Porphyromonadaceae</taxon>
        <taxon>Porphyromonas</taxon>
    </lineage>
</organism>
<sequence length="469" mass="53073">MDKKMKRTRIADALHGGLVGQEINIKGWVRTKRGNKAVNFIALNDGSTIHNMQIVADLASFDAAQMSQITTGACIGVIGTLVESQGAGQSVEVQASAIEIYGTADPATYPLQKKGHTLEFLREIAHLRPRTNTFGAIYRIRHHMAIAIHTFFHNKGYYYFHAPLITASDCEGAGQMFQVTTLNPDSLPRTEEGQVDYRKDFFGRHTSLTVSGQLEGEMAAMALGGIYTFGPTFRAENSNTPRHLAEFWMIEPEVAFLEIEDNMDLAEEFIKYCVQWALDNCMDDISFLSEHFDKELIDRLKFVLEKPFVRLAYTEGIRILEEAVKNGVKFEFPIYWGADLASEHERYLVEVHFKTPVIMTDYPKEIKSFYMKLNDDGKTVRGMDVLFPKIGEIIGGSEREADYDKLVARANEMGVPEKDIWWYLDSRRYGTAPHSGFGLGFERLLLFVTGMSNIRDVIPFPRTPNNAEF</sequence>
<name>SYN_PORGI</name>
<protein>
    <recommendedName>
        <fullName evidence="1">Asparagine--tRNA ligase</fullName>
        <ecNumber evidence="1">6.1.1.22</ecNumber>
    </recommendedName>
    <alternativeName>
        <fullName evidence="1">Asparaginyl-tRNA synthetase</fullName>
        <shortName evidence="1">AsnRS</shortName>
    </alternativeName>
</protein>
<dbReference type="EC" id="6.1.1.22" evidence="1"/>
<dbReference type="EMBL" id="AE015924">
    <property type="protein sequence ID" value="AAQ66230.1"/>
    <property type="molecule type" value="Genomic_DNA"/>
</dbReference>
<dbReference type="RefSeq" id="WP_005873704.1">
    <property type="nucleotide sequence ID" value="NC_002950.2"/>
</dbReference>
<dbReference type="SMR" id="Q7MVE5"/>
<dbReference type="STRING" id="242619.PG_1121"/>
<dbReference type="EnsemblBacteria" id="AAQ66230">
    <property type="protein sequence ID" value="AAQ66230"/>
    <property type="gene ID" value="PG_1121"/>
</dbReference>
<dbReference type="KEGG" id="pgi:PG_1121"/>
<dbReference type="eggNOG" id="COG0017">
    <property type="taxonomic scope" value="Bacteria"/>
</dbReference>
<dbReference type="HOGENOM" id="CLU_004553_2_0_10"/>
<dbReference type="Proteomes" id="UP000000588">
    <property type="component" value="Chromosome"/>
</dbReference>
<dbReference type="GO" id="GO:0005737">
    <property type="term" value="C:cytoplasm"/>
    <property type="evidence" value="ECO:0007669"/>
    <property type="project" value="UniProtKB-SubCell"/>
</dbReference>
<dbReference type="GO" id="GO:0004816">
    <property type="term" value="F:asparagine-tRNA ligase activity"/>
    <property type="evidence" value="ECO:0007669"/>
    <property type="project" value="UniProtKB-UniRule"/>
</dbReference>
<dbReference type="GO" id="GO:0005524">
    <property type="term" value="F:ATP binding"/>
    <property type="evidence" value="ECO:0007669"/>
    <property type="project" value="UniProtKB-UniRule"/>
</dbReference>
<dbReference type="GO" id="GO:0003676">
    <property type="term" value="F:nucleic acid binding"/>
    <property type="evidence" value="ECO:0007669"/>
    <property type="project" value="InterPro"/>
</dbReference>
<dbReference type="GO" id="GO:0006421">
    <property type="term" value="P:asparaginyl-tRNA aminoacylation"/>
    <property type="evidence" value="ECO:0007669"/>
    <property type="project" value="UniProtKB-UniRule"/>
</dbReference>
<dbReference type="CDD" id="cd00776">
    <property type="entry name" value="AsxRS_core"/>
    <property type="match status" value="1"/>
</dbReference>
<dbReference type="CDD" id="cd04318">
    <property type="entry name" value="EcAsnRS_like_N"/>
    <property type="match status" value="1"/>
</dbReference>
<dbReference type="FunFam" id="3.30.930.10:FF:000016">
    <property type="entry name" value="Asparagine--tRNA ligase"/>
    <property type="match status" value="1"/>
</dbReference>
<dbReference type="Gene3D" id="3.30.930.10">
    <property type="entry name" value="Bira Bifunctional Protein, Domain 2"/>
    <property type="match status" value="1"/>
</dbReference>
<dbReference type="Gene3D" id="2.40.50.140">
    <property type="entry name" value="Nucleic acid-binding proteins"/>
    <property type="match status" value="1"/>
</dbReference>
<dbReference type="HAMAP" id="MF_00534">
    <property type="entry name" value="Asn_tRNA_synth"/>
    <property type="match status" value="1"/>
</dbReference>
<dbReference type="InterPro" id="IPR004364">
    <property type="entry name" value="Aa-tRNA-synt_II"/>
</dbReference>
<dbReference type="InterPro" id="IPR006195">
    <property type="entry name" value="aa-tRNA-synth_II"/>
</dbReference>
<dbReference type="InterPro" id="IPR045864">
    <property type="entry name" value="aa-tRNA-synth_II/BPL/LPL"/>
</dbReference>
<dbReference type="InterPro" id="IPR004522">
    <property type="entry name" value="Asn-tRNA-ligase"/>
</dbReference>
<dbReference type="InterPro" id="IPR002312">
    <property type="entry name" value="Asp/Asn-tRNA-synth_IIb"/>
</dbReference>
<dbReference type="InterPro" id="IPR012340">
    <property type="entry name" value="NA-bd_OB-fold"/>
</dbReference>
<dbReference type="InterPro" id="IPR004365">
    <property type="entry name" value="NA-bd_OB_tRNA"/>
</dbReference>
<dbReference type="NCBIfam" id="TIGR00457">
    <property type="entry name" value="asnS"/>
    <property type="match status" value="1"/>
</dbReference>
<dbReference type="NCBIfam" id="NF003037">
    <property type="entry name" value="PRK03932.1"/>
    <property type="match status" value="1"/>
</dbReference>
<dbReference type="PANTHER" id="PTHR22594:SF34">
    <property type="entry name" value="ASPARAGINE--TRNA LIGASE, MITOCHONDRIAL-RELATED"/>
    <property type="match status" value="1"/>
</dbReference>
<dbReference type="PANTHER" id="PTHR22594">
    <property type="entry name" value="ASPARTYL/LYSYL-TRNA SYNTHETASE"/>
    <property type="match status" value="1"/>
</dbReference>
<dbReference type="Pfam" id="PF00152">
    <property type="entry name" value="tRNA-synt_2"/>
    <property type="match status" value="1"/>
</dbReference>
<dbReference type="Pfam" id="PF01336">
    <property type="entry name" value="tRNA_anti-codon"/>
    <property type="match status" value="1"/>
</dbReference>
<dbReference type="PRINTS" id="PR01042">
    <property type="entry name" value="TRNASYNTHASP"/>
</dbReference>
<dbReference type="SUPFAM" id="SSF55681">
    <property type="entry name" value="Class II aaRS and biotin synthetases"/>
    <property type="match status" value="1"/>
</dbReference>
<dbReference type="SUPFAM" id="SSF50249">
    <property type="entry name" value="Nucleic acid-binding proteins"/>
    <property type="match status" value="1"/>
</dbReference>
<dbReference type="PROSITE" id="PS50862">
    <property type="entry name" value="AA_TRNA_LIGASE_II"/>
    <property type="match status" value="1"/>
</dbReference>
<comment type="catalytic activity">
    <reaction evidence="1">
        <text>tRNA(Asn) + L-asparagine + ATP = L-asparaginyl-tRNA(Asn) + AMP + diphosphate + H(+)</text>
        <dbReference type="Rhea" id="RHEA:11180"/>
        <dbReference type="Rhea" id="RHEA-COMP:9659"/>
        <dbReference type="Rhea" id="RHEA-COMP:9674"/>
        <dbReference type="ChEBI" id="CHEBI:15378"/>
        <dbReference type="ChEBI" id="CHEBI:30616"/>
        <dbReference type="ChEBI" id="CHEBI:33019"/>
        <dbReference type="ChEBI" id="CHEBI:58048"/>
        <dbReference type="ChEBI" id="CHEBI:78442"/>
        <dbReference type="ChEBI" id="CHEBI:78515"/>
        <dbReference type="ChEBI" id="CHEBI:456215"/>
        <dbReference type="EC" id="6.1.1.22"/>
    </reaction>
</comment>
<comment type="subunit">
    <text evidence="1">Homodimer.</text>
</comment>
<comment type="subcellular location">
    <subcellularLocation>
        <location evidence="1">Cytoplasm</location>
    </subcellularLocation>
</comment>
<comment type="similarity">
    <text evidence="1">Belongs to the class-II aminoacyl-tRNA synthetase family.</text>
</comment>
<keyword id="KW-0030">Aminoacyl-tRNA synthetase</keyword>
<keyword id="KW-0067">ATP-binding</keyword>
<keyword id="KW-0963">Cytoplasm</keyword>
<keyword id="KW-0436">Ligase</keyword>
<keyword id="KW-0547">Nucleotide-binding</keyword>
<keyword id="KW-0648">Protein biosynthesis</keyword>
<keyword id="KW-1185">Reference proteome</keyword>
<proteinExistence type="inferred from homology"/>
<evidence type="ECO:0000255" key="1">
    <source>
        <dbReference type="HAMAP-Rule" id="MF_00534"/>
    </source>
</evidence>
<accession>Q7MVE5</accession>